<dbReference type="EC" id="6.1.1.7" evidence="1"/>
<dbReference type="EMBL" id="CP001032">
    <property type="protein sequence ID" value="ACB77112.1"/>
    <property type="molecule type" value="Genomic_DNA"/>
</dbReference>
<dbReference type="RefSeq" id="WP_012376641.1">
    <property type="nucleotide sequence ID" value="NC_010571.1"/>
</dbReference>
<dbReference type="SMR" id="B1ZZ40"/>
<dbReference type="STRING" id="452637.Oter_3838"/>
<dbReference type="KEGG" id="ote:Oter_3838"/>
<dbReference type="eggNOG" id="COG0013">
    <property type="taxonomic scope" value="Bacteria"/>
</dbReference>
<dbReference type="HOGENOM" id="CLU_004485_5_0_0"/>
<dbReference type="OrthoDB" id="9803884at2"/>
<dbReference type="Proteomes" id="UP000007013">
    <property type="component" value="Chromosome"/>
</dbReference>
<dbReference type="GO" id="GO:0005737">
    <property type="term" value="C:cytoplasm"/>
    <property type="evidence" value="ECO:0007669"/>
    <property type="project" value="UniProtKB-SubCell"/>
</dbReference>
<dbReference type="GO" id="GO:0004813">
    <property type="term" value="F:alanine-tRNA ligase activity"/>
    <property type="evidence" value="ECO:0007669"/>
    <property type="project" value="UniProtKB-UniRule"/>
</dbReference>
<dbReference type="GO" id="GO:0002161">
    <property type="term" value="F:aminoacyl-tRNA deacylase activity"/>
    <property type="evidence" value="ECO:0007669"/>
    <property type="project" value="TreeGrafter"/>
</dbReference>
<dbReference type="GO" id="GO:0005524">
    <property type="term" value="F:ATP binding"/>
    <property type="evidence" value="ECO:0007669"/>
    <property type="project" value="UniProtKB-UniRule"/>
</dbReference>
<dbReference type="GO" id="GO:0000049">
    <property type="term" value="F:tRNA binding"/>
    <property type="evidence" value="ECO:0007669"/>
    <property type="project" value="UniProtKB-KW"/>
</dbReference>
<dbReference type="GO" id="GO:0008270">
    <property type="term" value="F:zinc ion binding"/>
    <property type="evidence" value="ECO:0007669"/>
    <property type="project" value="UniProtKB-UniRule"/>
</dbReference>
<dbReference type="GO" id="GO:0006419">
    <property type="term" value="P:alanyl-tRNA aminoacylation"/>
    <property type="evidence" value="ECO:0007669"/>
    <property type="project" value="UniProtKB-UniRule"/>
</dbReference>
<dbReference type="CDD" id="cd00673">
    <property type="entry name" value="AlaRS_core"/>
    <property type="match status" value="1"/>
</dbReference>
<dbReference type="FunFam" id="3.10.310.40:FF:000001">
    <property type="entry name" value="Alanine--tRNA ligase"/>
    <property type="match status" value="1"/>
</dbReference>
<dbReference type="FunFam" id="3.30.930.10:FF:000011">
    <property type="entry name" value="Alanine--tRNA ligase, cytoplasmic"/>
    <property type="match status" value="1"/>
</dbReference>
<dbReference type="FunFam" id="3.30.980.10:FF:000004">
    <property type="entry name" value="Alanine--tRNA ligase, cytoplasmic"/>
    <property type="match status" value="1"/>
</dbReference>
<dbReference type="Gene3D" id="2.40.30.130">
    <property type="match status" value="1"/>
</dbReference>
<dbReference type="Gene3D" id="3.10.310.40">
    <property type="match status" value="1"/>
</dbReference>
<dbReference type="Gene3D" id="3.30.54.20">
    <property type="match status" value="1"/>
</dbReference>
<dbReference type="Gene3D" id="6.10.250.550">
    <property type="match status" value="1"/>
</dbReference>
<dbReference type="Gene3D" id="3.30.930.10">
    <property type="entry name" value="Bira Bifunctional Protein, Domain 2"/>
    <property type="match status" value="1"/>
</dbReference>
<dbReference type="Gene3D" id="3.30.980.10">
    <property type="entry name" value="Threonyl-trna Synthetase, Chain A, domain 2"/>
    <property type="match status" value="1"/>
</dbReference>
<dbReference type="HAMAP" id="MF_00036_B">
    <property type="entry name" value="Ala_tRNA_synth_B"/>
    <property type="match status" value="1"/>
</dbReference>
<dbReference type="InterPro" id="IPR045864">
    <property type="entry name" value="aa-tRNA-synth_II/BPL/LPL"/>
</dbReference>
<dbReference type="InterPro" id="IPR002318">
    <property type="entry name" value="Ala-tRNA-lgiase_IIc"/>
</dbReference>
<dbReference type="InterPro" id="IPR018162">
    <property type="entry name" value="Ala-tRNA-ligase_IIc_anticod-bd"/>
</dbReference>
<dbReference type="InterPro" id="IPR018165">
    <property type="entry name" value="Ala-tRNA-synth_IIc_core"/>
</dbReference>
<dbReference type="InterPro" id="IPR018164">
    <property type="entry name" value="Ala-tRNA-synth_IIc_N"/>
</dbReference>
<dbReference type="InterPro" id="IPR050058">
    <property type="entry name" value="Ala-tRNA_ligase"/>
</dbReference>
<dbReference type="InterPro" id="IPR023033">
    <property type="entry name" value="Ala_tRNA_ligase_euk/bac"/>
</dbReference>
<dbReference type="InterPro" id="IPR003156">
    <property type="entry name" value="DHHA1_dom"/>
</dbReference>
<dbReference type="InterPro" id="IPR018163">
    <property type="entry name" value="Thr/Ala-tRNA-synth_IIc_edit"/>
</dbReference>
<dbReference type="InterPro" id="IPR009000">
    <property type="entry name" value="Transl_B-barrel_sf"/>
</dbReference>
<dbReference type="InterPro" id="IPR012947">
    <property type="entry name" value="tRNA_SAD"/>
</dbReference>
<dbReference type="NCBIfam" id="TIGR00344">
    <property type="entry name" value="alaS"/>
    <property type="match status" value="1"/>
</dbReference>
<dbReference type="PANTHER" id="PTHR11777:SF9">
    <property type="entry name" value="ALANINE--TRNA LIGASE, CYTOPLASMIC"/>
    <property type="match status" value="1"/>
</dbReference>
<dbReference type="PANTHER" id="PTHR11777">
    <property type="entry name" value="ALANYL-TRNA SYNTHETASE"/>
    <property type="match status" value="1"/>
</dbReference>
<dbReference type="Pfam" id="PF02272">
    <property type="entry name" value="DHHA1"/>
    <property type="match status" value="1"/>
</dbReference>
<dbReference type="Pfam" id="PF01411">
    <property type="entry name" value="tRNA-synt_2c"/>
    <property type="match status" value="2"/>
</dbReference>
<dbReference type="Pfam" id="PF07973">
    <property type="entry name" value="tRNA_SAD"/>
    <property type="match status" value="1"/>
</dbReference>
<dbReference type="PRINTS" id="PR00980">
    <property type="entry name" value="TRNASYNTHALA"/>
</dbReference>
<dbReference type="SMART" id="SM00863">
    <property type="entry name" value="tRNA_SAD"/>
    <property type="match status" value="1"/>
</dbReference>
<dbReference type="SUPFAM" id="SSF55681">
    <property type="entry name" value="Class II aaRS and biotin synthetases"/>
    <property type="match status" value="1"/>
</dbReference>
<dbReference type="SUPFAM" id="SSF101353">
    <property type="entry name" value="Putative anticodon-binding domain of alanyl-tRNA synthetase (AlaRS)"/>
    <property type="match status" value="1"/>
</dbReference>
<dbReference type="SUPFAM" id="SSF55186">
    <property type="entry name" value="ThrRS/AlaRS common domain"/>
    <property type="match status" value="1"/>
</dbReference>
<dbReference type="SUPFAM" id="SSF50447">
    <property type="entry name" value="Translation proteins"/>
    <property type="match status" value="1"/>
</dbReference>
<dbReference type="PROSITE" id="PS50860">
    <property type="entry name" value="AA_TRNA_LIGASE_II_ALA"/>
    <property type="match status" value="1"/>
</dbReference>
<proteinExistence type="inferred from homology"/>
<protein>
    <recommendedName>
        <fullName evidence="1">Alanine--tRNA ligase</fullName>
        <ecNumber evidence="1">6.1.1.7</ecNumber>
    </recommendedName>
    <alternativeName>
        <fullName evidence="1">Alanyl-tRNA synthetase</fullName>
        <shortName evidence="1">AlaRS</shortName>
    </alternativeName>
</protein>
<feature type="chain" id="PRO_0000347708" description="Alanine--tRNA ligase">
    <location>
        <begin position="1"/>
        <end position="937"/>
    </location>
</feature>
<feature type="binding site" evidence="1">
    <location>
        <position position="626"/>
    </location>
    <ligand>
        <name>Zn(2+)</name>
        <dbReference type="ChEBI" id="CHEBI:29105"/>
    </ligand>
</feature>
<feature type="binding site" evidence="1">
    <location>
        <position position="630"/>
    </location>
    <ligand>
        <name>Zn(2+)</name>
        <dbReference type="ChEBI" id="CHEBI:29105"/>
    </ligand>
</feature>
<feature type="binding site" evidence="1">
    <location>
        <position position="727"/>
    </location>
    <ligand>
        <name>Zn(2+)</name>
        <dbReference type="ChEBI" id="CHEBI:29105"/>
    </ligand>
</feature>
<feature type="binding site" evidence="1">
    <location>
        <position position="731"/>
    </location>
    <ligand>
        <name>Zn(2+)</name>
        <dbReference type="ChEBI" id="CHEBI:29105"/>
    </ligand>
</feature>
<keyword id="KW-0030">Aminoacyl-tRNA synthetase</keyword>
<keyword id="KW-0067">ATP-binding</keyword>
<keyword id="KW-0963">Cytoplasm</keyword>
<keyword id="KW-0436">Ligase</keyword>
<keyword id="KW-0479">Metal-binding</keyword>
<keyword id="KW-0547">Nucleotide-binding</keyword>
<keyword id="KW-0648">Protein biosynthesis</keyword>
<keyword id="KW-1185">Reference proteome</keyword>
<keyword id="KW-0694">RNA-binding</keyword>
<keyword id="KW-0820">tRNA-binding</keyword>
<keyword id="KW-0862">Zinc</keyword>
<organism>
    <name type="scientific">Opitutus terrae (strain DSM 11246 / JCM 15787 / PB90-1)</name>
    <dbReference type="NCBI Taxonomy" id="452637"/>
    <lineage>
        <taxon>Bacteria</taxon>
        <taxon>Pseudomonadati</taxon>
        <taxon>Verrucomicrobiota</taxon>
        <taxon>Opitutia</taxon>
        <taxon>Opitutales</taxon>
        <taxon>Opitutaceae</taxon>
        <taxon>Opitutus</taxon>
    </lineage>
</organism>
<sequence>MTSAEIRQSFLDFFARQGHTIVPSSSLLPDSPGLLFTNAGMNQFVPIFLGDRAPDVSKWAGARPAKDTRAADTQKCIRAGGKHNDLEDVGFDTYHHTMFEMLGNWSFGDYFKKESITWGWELITKVWGIPAKRLFATVYSPDKSKNDPSDFDQEAYDIWAGVFKKEGLDPAVHIVHGNKKDNFWMMGDTGPCGPCSEIHFNLLPSDDEVEGRKLVNAGVPRCIEIWNHVFIQFNANADGTFSPLAAKHVDTGMGFERVAGIYATTKGFKDFSRDPSNYNADVFAPLFAKIEELSKKTYNGTVPTRREGLGEQENIDIAFRVLADHARCVSCAIADNILPGNEGRNYVIRRILRRGILYGKKLNLATGFFEQLVAPVVESLGAVFPELKERQDIIRRVIRSEEESFGRTLEKGLQLFNEGAKLLLDAHPIKGQADVPGVGTITNIGGVTRFLGGKFVFRLYDTYGFPVDMTQLLATERGLAVNMVEFASEMQQQQDRSRAAQKKEVIVAATEGDNTEAAQPTKFIGYDRLTADAQVLDVVKTDKDLFLVFDQTPFYAEMGGQTGDHGVVKIDGQTFAILATVKDKAGRFLHKLAPACAADVARLNPVGKKAALGVSPLARRAISRHHSAEHLVHWALRKTLGTHVRQAGTSKTKERMRFDFTHFEALTPEQIAEVERLVNSKILSNDKVEAYETEFDKKPEGTLAFFGEKYGKIVRVVDIGGYSRELCGGTHVSTTSEIGLFKIVAEMAIAAGTRRLEAVAGQAAYDFVEEHETALKAVTHKLNAGPQDVAQKLDSLLAHQKELEKKLKAYEQKAAAGLADELAAKATARDGLKFVTATVSIDNQDALRSLGSQVLHKLGEGVVTLGAALGDRASLVVYCSPAAIKAGHQAGKIVGELSTKIGGKGGGKPDFAMGGGKDPSKLADVLKQSAPGVICSW</sequence>
<name>SYA_OPITP</name>
<accession>B1ZZ40</accession>
<gene>
    <name evidence="1" type="primary">alaS</name>
    <name type="ordered locus">Oter_3838</name>
</gene>
<comment type="function">
    <text evidence="1">Catalyzes the attachment of alanine to tRNA(Ala) in a two-step reaction: alanine is first activated by ATP to form Ala-AMP and then transferred to the acceptor end of tRNA(Ala). Also edits incorrectly charged Ser-tRNA(Ala) and Gly-tRNA(Ala) via its editing domain.</text>
</comment>
<comment type="catalytic activity">
    <reaction evidence="1">
        <text>tRNA(Ala) + L-alanine + ATP = L-alanyl-tRNA(Ala) + AMP + diphosphate</text>
        <dbReference type="Rhea" id="RHEA:12540"/>
        <dbReference type="Rhea" id="RHEA-COMP:9657"/>
        <dbReference type="Rhea" id="RHEA-COMP:9923"/>
        <dbReference type="ChEBI" id="CHEBI:30616"/>
        <dbReference type="ChEBI" id="CHEBI:33019"/>
        <dbReference type="ChEBI" id="CHEBI:57972"/>
        <dbReference type="ChEBI" id="CHEBI:78442"/>
        <dbReference type="ChEBI" id="CHEBI:78497"/>
        <dbReference type="ChEBI" id="CHEBI:456215"/>
        <dbReference type="EC" id="6.1.1.7"/>
    </reaction>
</comment>
<comment type="cofactor">
    <cofactor evidence="1">
        <name>Zn(2+)</name>
        <dbReference type="ChEBI" id="CHEBI:29105"/>
    </cofactor>
    <text evidence="1">Binds 1 zinc ion per subunit.</text>
</comment>
<comment type="subcellular location">
    <subcellularLocation>
        <location evidence="1">Cytoplasm</location>
    </subcellularLocation>
</comment>
<comment type="domain">
    <text evidence="1">Consists of three domains; the N-terminal catalytic domain, the editing domain and the C-terminal C-Ala domain. The editing domain removes incorrectly charged amino acids, while the C-Ala domain, along with tRNA(Ala), serves as a bridge to cooperatively bring together the editing and aminoacylation centers thus stimulating deacylation of misacylated tRNAs.</text>
</comment>
<comment type="similarity">
    <text evidence="1">Belongs to the class-II aminoacyl-tRNA synthetase family.</text>
</comment>
<reference key="1">
    <citation type="journal article" date="2011" name="J. Bacteriol.">
        <title>Genome sequence of the verrucomicrobium Opitutus terrae PB90-1, an abundant inhabitant of rice paddy soil ecosystems.</title>
        <authorList>
            <person name="van Passel M.W."/>
            <person name="Kant R."/>
            <person name="Palva A."/>
            <person name="Copeland A."/>
            <person name="Lucas S."/>
            <person name="Lapidus A."/>
            <person name="Glavina del Rio T."/>
            <person name="Pitluck S."/>
            <person name="Goltsman E."/>
            <person name="Clum A."/>
            <person name="Sun H."/>
            <person name="Schmutz J."/>
            <person name="Larimer F.W."/>
            <person name="Land M.L."/>
            <person name="Hauser L."/>
            <person name="Kyrpides N."/>
            <person name="Mikhailova N."/>
            <person name="Richardson P.P."/>
            <person name="Janssen P.H."/>
            <person name="de Vos W.M."/>
            <person name="Smidt H."/>
        </authorList>
    </citation>
    <scope>NUCLEOTIDE SEQUENCE [LARGE SCALE GENOMIC DNA]</scope>
    <source>
        <strain>DSM 11246 / JCM 15787 / PB90-1</strain>
    </source>
</reference>
<evidence type="ECO:0000255" key="1">
    <source>
        <dbReference type="HAMAP-Rule" id="MF_00036"/>
    </source>
</evidence>